<accession>B5R5H2</accession>
<organism>
    <name type="scientific">Salmonella enteritidis PT4 (strain P125109)</name>
    <dbReference type="NCBI Taxonomy" id="550537"/>
    <lineage>
        <taxon>Bacteria</taxon>
        <taxon>Pseudomonadati</taxon>
        <taxon>Pseudomonadota</taxon>
        <taxon>Gammaproteobacteria</taxon>
        <taxon>Enterobacterales</taxon>
        <taxon>Enterobacteriaceae</taxon>
        <taxon>Salmonella</taxon>
    </lineage>
</organism>
<dbReference type="EC" id="6.5.1.2" evidence="1"/>
<dbReference type="EMBL" id="AM933172">
    <property type="protein sequence ID" value="CAR35140.1"/>
    <property type="molecule type" value="Genomic_DNA"/>
</dbReference>
<dbReference type="RefSeq" id="WP_001241846.1">
    <property type="nucleotide sequence ID" value="NC_011294.1"/>
</dbReference>
<dbReference type="SMR" id="B5R5H2"/>
<dbReference type="KEGG" id="set:SEN3561"/>
<dbReference type="HOGENOM" id="CLU_489786_0_0_6"/>
<dbReference type="Proteomes" id="UP000000613">
    <property type="component" value="Chromosome"/>
</dbReference>
<dbReference type="GO" id="GO:0003911">
    <property type="term" value="F:DNA ligase (NAD+) activity"/>
    <property type="evidence" value="ECO:0007669"/>
    <property type="project" value="UniProtKB-UniRule"/>
</dbReference>
<dbReference type="GO" id="GO:0006281">
    <property type="term" value="P:DNA repair"/>
    <property type="evidence" value="ECO:0007669"/>
    <property type="project" value="UniProtKB-KW"/>
</dbReference>
<dbReference type="GO" id="GO:0006260">
    <property type="term" value="P:DNA replication"/>
    <property type="evidence" value="ECO:0007669"/>
    <property type="project" value="UniProtKB-KW"/>
</dbReference>
<dbReference type="FunFam" id="1.10.287.610:FF:000003">
    <property type="entry name" value="DNA ligase B"/>
    <property type="match status" value="1"/>
</dbReference>
<dbReference type="FunFam" id="2.40.50.140:FF:000139">
    <property type="entry name" value="DNA ligase B"/>
    <property type="match status" value="1"/>
</dbReference>
<dbReference type="FunFam" id="3.30.470.30:FF:000007">
    <property type="entry name" value="DNA ligase B"/>
    <property type="match status" value="1"/>
</dbReference>
<dbReference type="Gene3D" id="1.10.150.20">
    <property type="entry name" value="5' to 3' exonuclease, C-terminal subdomain"/>
    <property type="match status" value="1"/>
</dbReference>
<dbReference type="Gene3D" id="3.30.470.30">
    <property type="entry name" value="DNA ligase/mRNA capping enzyme"/>
    <property type="match status" value="1"/>
</dbReference>
<dbReference type="Gene3D" id="1.10.287.610">
    <property type="entry name" value="Helix hairpin bin"/>
    <property type="match status" value="1"/>
</dbReference>
<dbReference type="Gene3D" id="2.40.50.140">
    <property type="entry name" value="Nucleic acid-binding proteins"/>
    <property type="match status" value="1"/>
</dbReference>
<dbReference type="HAMAP" id="MF_01587">
    <property type="entry name" value="DNA_ligase_B"/>
    <property type="match status" value="1"/>
</dbReference>
<dbReference type="InterPro" id="IPR018239">
    <property type="entry name" value="DNA_ligase_AS"/>
</dbReference>
<dbReference type="InterPro" id="IPR020923">
    <property type="entry name" value="DNA_ligase_B"/>
</dbReference>
<dbReference type="InterPro" id="IPR033136">
    <property type="entry name" value="DNA_ligase_CS"/>
</dbReference>
<dbReference type="InterPro" id="IPR013839">
    <property type="entry name" value="DNAligase_adenylation"/>
</dbReference>
<dbReference type="InterPro" id="IPR013840">
    <property type="entry name" value="DNAligase_N"/>
</dbReference>
<dbReference type="InterPro" id="IPR012340">
    <property type="entry name" value="NA-bd_OB-fold"/>
</dbReference>
<dbReference type="InterPro" id="IPR050326">
    <property type="entry name" value="NAD_dep_DNA_ligaseB"/>
</dbReference>
<dbReference type="InterPro" id="IPR004150">
    <property type="entry name" value="NAD_DNA_ligase_OB"/>
</dbReference>
<dbReference type="InterPro" id="IPR010994">
    <property type="entry name" value="RuvA_2-like"/>
</dbReference>
<dbReference type="NCBIfam" id="NF005987">
    <property type="entry name" value="PRK08097.1"/>
    <property type="match status" value="1"/>
</dbReference>
<dbReference type="PANTHER" id="PTHR47810">
    <property type="entry name" value="DNA LIGASE"/>
    <property type="match status" value="1"/>
</dbReference>
<dbReference type="PANTHER" id="PTHR47810:SF1">
    <property type="entry name" value="DNA LIGASE B"/>
    <property type="match status" value="1"/>
</dbReference>
<dbReference type="Pfam" id="PF01653">
    <property type="entry name" value="DNA_ligase_aden"/>
    <property type="match status" value="1"/>
</dbReference>
<dbReference type="Pfam" id="PF03120">
    <property type="entry name" value="DNA_ligase_OB"/>
    <property type="match status" value="1"/>
</dbReference>
<dbReference type="SMART" id="SM00532">
    <property type="entry name" value="LIGANc"/>
    <property type="match status" value="1"/>
</dbReference>
<dbReference type="SUPFAM" id="SSF56091">
    <property type="entry name" value="DNA ligase/mRNA capping enzyme, catalytic domain"/>
    <property type="match status" value="1"/>
</dbReference>
<dbReference type="SUPFAM" id="SSF50249">
    <property type="entry name" value="Nucleic acid-binding proteins"/>
    <property type="match status" value="1"/>
</dbReference>
<dbReference type="SUPFAM" id="SSF47781">
    <property type="entry name" value="RuvA domain 2-like"/>
    <property type="match status" value="1"/>
</dbReference>
<dbReference type="PROSITE" id="PS01055">
    <property type="entry name" value="DNA_LIGASE_N1"/>
    <property type="match status" value="1"/>
</dbReference>
<dbReference type="PROSITE" id="PS01056">
    <property type="entry name" value="DNA_LIGASE_N2"/>
    <property type="match status" value="1"/>
</dbReference>
<proteinExistence type="inferred from homology"/>
<sequence>MRLWKSMAWGILLWHSQSGALCPAWPPARAAEEITRLQQQLADWNDIYWKQGVSAVDDSVYDQLSARLVQWQRCVGQDVSSTPVSPPLNGTTMHPVAHTGVRKLADRQAVEQWMRGRSELWVQPKVDGVAVTLVYQNGKLTRAISRGNGLQGEDWTPKIRLIPSIPQTTQGALANAVLQGEIFLQREGHIQQRMGGMNARSKVAGMLMRQDNASALNSLGIFIWAWPDGPANMPERLSQLAKAGFSLTNKYTLAVKDASEVERARQSWLTSALPFVTDGVVIRMAKEPASQHWRPGQGDWLAAWKYPPVAQVAQVSAIQFSVGKSGKITVVASLVPVILDDKRVQRVNIDSVKRWEAWDIAPGDQILVSLAGQGIPRLDEVVWRSRERSKPVPPDSHFNSLTCFYASETCQEQFISRLVWLGSRSALGLDGMGEASWRALHQTHRFKHIFSWLALTSAQIANTPGFAKGKSEQIWRQFNLARRQSFTRWIMAMDIPLTQAALQASGDRSWEQLLMRTEQHWRQLPATGERRAGRVIDWRNNPQIKTLSRWLAAQHIPGFGS</sequence>
<name>LIGB_SALEP</name>
<protein>
    <recommendedName>
        <fullName evidence="1">DNA ligase B</fullName>
        <ecNumber evidence="1">6.5.1.2</ecNumber>
    </recommendedName>
    <alternativeName>
        <fullName evidence="1">Polydeoxyribonucleotide synthase [NAD(+)] B</fullName>
    </alternativeName>
</protein>
<keyword id="KW-0227">DNA damage</keyword>
<keyword id="KW-0234">DNA repair</keyword>
<keyword id="KW-0235">DNA replication</keyword>
<keyword id="KW-0436">Ligase</keyword>
<keyword id="KW-0520">NAD</keyword>
<gene>
    <name evidence="1" type="primary">ligB</name>
    <name type="ordered locus">SEN3561</name>
</gene>
<comment type="function">
    <text evidence="1">Catalyzes the formation of phosphodiester linkages between 5'-phosphoryl and 3'-hydroxyl groups in double-stranded DNA using NAD as a coenzyme and as the energy source for the reaction.</text>
</comment>
<comment type="catalytic activity">
    <reaction evidence="1">
        <text>NAD(+) + (deoxyribonucleotide)n-3'-hydroxyl + 5'-phospho-(deoxyribonucleotide)m = (deoxyribonucleotide)n+m + AMP + beta-nicotinamide D-nucleotide.</text>
        <dbReference type="EC" id="6.5.1.2"/>
    </reaction>
</comment>
<comment type="similarity">
    <text evidence="1">Belongs to the NAD-dependent DNA ligase family. LigB subfamily.</text>
</comment>
<feature type="chain" id="PRO_1000147728" description="DNA ligase B">
    <location>
        <begin position="1"/>
        <end position="561"/>
    </location>
</feature>
<feature type="active site" description="N6-AMP-lysine intermediate" evidence="1">
    <location>
        <position position="125"/>
    </location>
</feature>
<reference key="1">
    <citation type="journal article" date="2008" name="Genome Res.">
        <title>Comparative genome analysis of Salmonella enteritidis PT4 and Salmonella gallinarum 287/91 provides insights into evolutionary and host adaptation pathways.</title>
        <authorList>
            <person name="Thomson N.R."/>
            <person name="Clayton D.J."/>
            <person name="Windhorst D."/>
            <person name="Vernikos G."/>
            <person name="Davidson S."/>
            <person name="Churcher C."/>
            <person name="Quail M.A."/>
            <person name="Stevens M."/>
            <person name="Jones M.A."/>
            <person name="Watson M."/>
            <person name="Barron A."/>
            <person name="Layton A."/>
            <person name="Pickard D."/>
            <person name="Kingsley R.A."/>
            <person name="Bignell A."/>
            <person name="Clark L."/>
            <person name="Harris B."/>
            <person name="Ormond D."/>
            <person name="Abdellah Z."/>
            <person name="Brooks K."/>
            <person name="Cherevach I."/>
            <person name="Chillingworth T."/>
            <person name="Woodward J."/>
            <person name="Norberczak H."/>
            <person name="Lord A."/>
            <person name="Arrowsmith C."/>
            <person name="Jagels K."/>
            <person name="Moule S."/>
            <person name="Mungall K."/>
            <person name="Saunders M."/>
            <person name="Whitehead S."/>
            <person name="Chabalgoity J.A."/>
            <person name="Maskell D."/>
            <person name="Humphreys T."/>
            <person name="Roberts M."/>
            <person name="Barrow P.A."/>
            <person name="Dougan G."/>
            <person name="Parkhill J."/>
        </authorList>
    </citation>
    <scope>NUCLEOTIDE SEQUENCE [LARGE SCALE GENOMIC DNA]</scope>
    <source>
        <strain>P125109</strain>
    </source>
</reference>
<evidence type="ECO:0000255" key="1">
    <source>
        <dbReference type="HAMAP-Rule" id="MF_01587"/>
    </source>
</evidence>